<organism>
    <name type="scientific">Methanopyrus kandleri (strain AV19 / DSM 6324 / JCM 9639 / NBRC 100938)</name>
    <dbReference type="NCBI Taxonomy" id="190192"/>
    <lineage>
        <taxon>Archaea</taxon>
        <taxon>Methanobacteriati</taxon>
        <taxon>Methanobacteriota</taxon>
        <taxon>Methanomada group</taxon>
        <taxon>Methanopyri</taxon>
        <taxon>Methanopyrales</taxon>
        <taxon>Methanopyraceae</taxon>
        <taxon>Methanopyrus</taxon>
    </lineage>
</organism>
<keyword id="KW-1185">Reference proteome</keyword>
<keyword id="KW-0687">Ribonucleoprotein</keyword>
<keyword id="KW-0689">Ribosomal protein</keyword>
<keyword id="KW-0694">RNA-binding</keyword>
<keyword id="KW-0699">rRNA-binding</keyword>
<dbReference type="EMBL" id="AE009439">
    <property type="protein sequence ID" value="AAM02433.1"/>
    <property type="molecule type" value="Genomic_DNA"/>
</dbReference>
<dbReference type="RefSeq" id="WP_011019588.1">
    <property type="nucleotide sequence ID" value="NC_003551.1"/>
</dbReference>
<dbReference type="SMR" id="Q8TW18"/>
<dbReference type="FunCoup" id="Q8TW18">
    <property type="interactions" value="140"/>
</dbReference>
<dbReference type="STRING" id="190192.MK1220"/>
<dbReference type="PaxDb" id="190192-MK1220"/>
<dbReference type="EnsemblBacteria" id="AAM02433">
    <property type="protein sequence ID" value="AAM02433"/>
    <property type="gene ID" value="MK1220"/>
</dbReference>
<dbReference type="GeneID" id="1477815"/>
<dbReference type="KEGG" id="mka:MK1220"/>
<dbReference type="PATRIC" id="fig|190192.8.peg.1323"/>
<dbReference type="HOGENOM" id="CLU_060400_0_0_2"/>
<dbReference type="InParanoid" id="Q8TW18"/>
<dbReference type="OrthoDB" id="372073at2157"/>
<dbReference type="Proteomes" id="UP000001826">
    <property type="component" value="Chromosome"/>
</dbReference>
<dbReference type="GO" id="GO:0022627">
    <property type="term" value="C:cytosolic small ribosomal subunit"/>
    <property type="evidence" value="ECO:0007669"/>
    <property type="project" value="TreeGrafter"/>
</dbReference>
<dbReference type="GO" id="GO:0019843">
    <property type="term" value="F:rRNA binding"/>
    <property type="evidence" value="ECO:0007669"/>
    <property type="project" value="UniProtKB-KW"/>
</dbReference>
<dbReference type="GO" id="GO:0003735">
    <property type="term" value="F:structural constituent of ribosome"/>
    <property type="evidence" value="ECO:0007669"/>
    <property type="project" value="InterPro"/>
</dbReference>
<dbReference type="GO" id="GO:0006412">
    <property type="term" value="P:translation"/>
    <property type="evidence" value="ECO:0007669"/>
    <property type="project" value="UniProtKB-UniRule"/>
</dbReference>
<dbReference type="CDD" id="cd06087">
    <property type="entry name" value="KOW_RPS4"/>
    <property type="match status" value="1"/>
</dbReference>
<dbReference type="CDD" id="cd00165">
    <property type="entry name" value="S4"/>
    <property type="match status" value="1"/>
</dbReference>
<dbReference type="FunFam" id="3.10.290.10:FF:000002">
    <property type="entry name" value="40S ribosomal protein S4"/>
    <property type="match status" value="1"/>
</dbReference>
<dbReference type="Gene3D" id="2.30.30.30">
    <property type="match status" value="1"/>
</dbReference>
<dbReference type="Gene3D" id="2.40.50.740">
    <property type="match status" value="1"/>
</dbReference>
<dbReference type="Gene3D" id="3.10.290.10">
    <property type="entry name" value="RNA-binding S4 domain"/>
    <property type="match status" value="1"/>
</dbReference>
<dbReference type="HAMAP" id="MF_00485">
    <property type="entry name" value="Ribosomal_eS4"/>
    <property type="match status" value="1"/>
</dbReference>
<dbReference type="InterPro" id="IPR014722">
    <property type="entry name" value="Rib_uL2_dom2"/>
</dbReference>
<dbReference type="InterPro" id="IPR000876">
    <property type="entry name" value="Ribosomal_eS4"/>
</dbReference>
<dbReference type="InterPro" id="IPR013845">
    <property type="entry name" value="Ribosomal_eS4_central_region"/>
</dbReference>
<dbReference type="InterPro" id="IPR038237">
    <property type="entry name" value="Ribosomal_eS4_central_sf"/>
</dbReference>
<dbReference type="InterPro" id="IPR041982">
    <property type="entry name" value="Ribosomal_eS4_KOW"/>
</dbReference>
<dbReference type="InterPro" id="IPR013843">
    <property type="entry name" value="Ribosomal_eS4_N"/>
</dbReference>
<dbReference type="InterPro" id="IPR018199">
    <property type="entry name" value="Ribosomal_eS4_N_CS"/>
</dbReference>
<dbReference type="InterPro" id="IPR002942">
    <property type="entry name" value="S4_RNA-bd"/>
</dbReference>
<dbReference type="InterPro" id="IPR036986">
    <property type="entry name" value="S4_RNA-bd_sf"/>
</dbReference>
<dbReference type="NCBIfam" id="NF003312">
    <property type="entry name" value="PRK04313.1"/>
    <property type="match status" value="1"/>
</dbReference>
<dbReference type="PANTHER" id="PTHR11581">
    <property type="entry name" value="30S/40S RIBOSOMAL PROTEIN S4"/>
    <property type="match status" value="1"/>
</dbReference>
<dbReference type="PANTHER" id="PTHR11581:SF0">
    <property type="entry name" value="SMALL RIBOSOMAL SUBUNIT PROTEIN ES4"/>
    <property type="match status" value="1"/>
</dbReference>
<dbReference type="Pfam" id="PF00900">
    <property type="entry name" value="Ribosomal_S4e"/>
    <property type="match status" value="1"/>
</dbReference>
<dbReference type="Pfam" id="PF08071">
    <property type="entry name" value="RS4NT"/>
    <property type="match status" value="1"/>
</dbReference>
<dbReference type="Pfam" id="PF01479">
    <property type="entry name" value="S4"/>
    <property type="match status" value="1"/>
</dbReference>
<dbReference type="PIRSF" id="PIRSF002116">
    <property type="entry name" value="Ribosomal_S4"/>
    <property type="match status" value="1"/>
</dbReference>
<dbReference type="SMART" id="SM00363">
    <property type="entry name" value="S4"/>
    <property type="match status" value="1"/>
</dbReference>
<dbReference type="SUPFAM" id="SSF55174">
    <property type="entry name" value="Alpha-L RNA-binding motif"/>
    <property type="match status" value="1"/>
</dbReference>
<dbReference type="PROSITE" id="PS00528">
    <property type="entry name" value="RIBOSOMAL_S4E"/>
    <property type="match status" value="1"/>
</dbReference>
<dbReference type="PROSITE" id="PS50889">
    <property type="entry name" value="S4"/>
    <property type="match status" value="1"/>
</dbReference>
<gene>
    <name evidence="1" type="primary">rps4e</name>
    <name type="ordered locus">MK1220</name>
</gene>
<accession>Q8TW18</accession>
<name>RS4E_METKA</name>
<comment type="similarity">
    <text evidence="1">Belongs to the eukaryotic ribosomal protein eS4 family.</text>
</comment>
<feature type="chain" id="PRO_0000130850" description="Small ribosomal subunit protein eS4">
    <location>
        <begin position="1"/>
        <end position="260"/>
    </location>
</feature>
<feature type="domain" description="S4 RNA-binding" evidence="1">
    <location>
        <begin position="46"/>
        <end position="111"/>
    </location>
</feature>
<proteinExistence type="inferred from homology"/>
<sequence>MGRARSGPKRHVKRLAAPYAWPIPRKEGGKFAPRPYPGPHTMDTSVPLLILVRDMLGYADYAREARKIITRGEIYVDGVVRKEPKFPVGIMDVVEIPRTGDRYRVVMNEHHRLDVVPISEEEARVKVCRIKNKTYVRGGNLQITMHDGKNWLVEIEDPTDPKEDVYSVGDSLVLELPEPDSGESWKVVDHIPFEEGVWVYAMTGRHSGEVGRVVEIQTFEGPQEDLITVENPEGDQFQTTKGRLIAIGKDEPLVTVRKEE</sequence>
<protein>
    <recommendedName>
        <fullName evidence="1">Small ribosomal subunit protein eS4</fullName>
    </recommendedName>
    <alternativeName>
        <fullName evidence="2">30S ribosomal protein S4e</fullName>
    </alternativeName>
</protein>
<reference key="1">
    <citation type="journal article" date="2002" name="Proc. Natl. Acad. Sci. U.S.A.">
        <title>The complete genome of hyperthermophile Methanopyrus kandleri AV19 and monophyly of archaeal methanogens.</title>
        <authorList>
            <person name="Slesarev A.I."/>
            <person name="Mezhevaya K.V."/>
            <person name="Makarova K.S."/>
            <person name="Polushin N.N."/>
            <person name="Shcherbinina O.V."/>
            <person name="Shakhova V.V."/>
            <person name="Belova G.I."/>
            <person name="Aravind L."/>
            <person name="Natale D.A."/>
            <person name="Rogozin I.B."/>
            <person name="Tatusov R.L."/>
            <person name="Wolf Y.I."/>
            <person name="Stetter K.O."/>
            <person name="Malykh A.G."/>
            <person name="Koonin E.V."/>
            <person name="Kozyavkin S.A."/>
        </authorList>
    </citation>
    <scope>NUCLEOTIDE SEQUENCE [LARGE SCALE GENOMIC DNA]</scope>
    <source>
        <strain>AV19 / DSM 6324 / JCM 9639 / NBRC 100938</strain>
    </source>
</reference>
<evidence type="ECO:0000255" key="1">
    <source>
        <dbReference type="HAMAP-Rule" id="MF_00485"/>
    </source>
</evidence>
<evidence type="ECO:0000305" key="2"/>